<evidence type="ECO:0000255" key="1">
    <source>
        <dbReference type="HAMAP-Rule" id="MF_00021"/>
    </source>
</evidence>
<comment type="function">
    <text evidence="1">Catalyzes the ATP-dependent transfer of a sulfur to tRNA to produce 4-thiouridine in position 8 of tRNAs, which functions as a near-UV photosensor. Also catalyzes the transfer of sulfur to the sulfur carrier protein ThiS, forming ThiS-thiocarboxylate. This is a step in the synthesis of thiazole, in the thiamine biosynthesis pathway. The sulfur is donated as persulfide by IscS.</text>
</comment>
<comment type="catalytic activity">
    <reaction evidence="1">
        <text>[ThiI sulfur-carrier protein]-S-sulfanyl-L-cysteine + a uridine in tRNA + 2 reduced [2Fe-2S]-[ferredoxin] + ATP + H(+) = [ThiI sulfur-carrier protein]-L-cysteine + a 4-thiouridine in tRNA + 2 oxidized [2Fe-2S]-[ferredoxin] + AMP + diphosphate</text>
        <dbReference type="Rhea" id="RHEA:24176"/>
        <dbReference type="Rhea" id="RHEA-COMP:10000"/>
        <dbReference type="Rhea" id="RHEA-COMP:10001"/>
        <dbReference type="Rhea" id="RHEA-COMP:13337"/>
        <dbReference type="Rhea" id="RHEA-COMP:13338"/>
        <dbReference type="Rhea" id="RHEA-COMP:13339"/>
        <dbReference type="Rhea" id="RHEA-COMP:13340"/>
        <dbReference type="ChEBI" id="CHEBI:15378"/>
        <dbReference type="ChEBI" id="CHEBI:29950"/>
        <dbReference type="ChEBI" id="CHEBI:30616"/>
        <dbReference type="ChEBI" id="CHEBI:33019"/>
        <dbReference type="ChEBI" id="CHEBI:33737"/>
        <dbReference type="ChEBI" id="CHEBI:33738"/>
        <dbReference type="ChEBI" id="CHEBI:61963"/>
        <dbReference type="ChEBI" id="CHEBI:65315"/>
        <dbReference type="ChEBI" id="CHEBI:136798"/>
        <dbReference type="ChEBI" id="CHEBI:456215"/>
        <dbReference type="EC" id="2.8.1.4"/>
    </reaction>
</comment>
<comment type="catalytic activity">
    <reaction evidence="1">
        <text>[ThiS sulfur-carrier protein]-C-terminal Gly-Gly-AMP + S-sulfanyl-L-cysteinyl-[cysteine desulfurase] + AH2 = [ThiS sulfur-carrier protein]-C-terminal-Gly-aminoethanethioate + L-cysteinyl-[cysteine desulfurase] + A + AMP + 2 H(+)</text>
        <dbReference type="Rhea" id="RHEA:43340"/>
        <dbReference type="Rhea" id="RHEA-COMP:12157"/>
        <dbReference type="Rhea" id="RHEA-COMP:12158"/>
        <dbReference type="Rhea" id="RHEA-COMP:12910"/>
        <dbReference type="Rhea" id="RHEA-COMP:19908"/>
        <dbReference type="ChEBI" id="CHEBI:13193"/>
        <dbReference type="ChEBI" id="CHEBI:15378"/>
        <dbReference type="ChEBI" id="CHEBI:17499"/>
        <dbReference type="ChEBI" id="CHEBI:29950"/>
        <dbReference type="ChEBI" id="CHEBI:61963"/>
        <dbReference type="ChEBI" id="CHEBI:90618"/>
        <dbReference type="ChEBI" id="CHEBI:232372"/>
        <dbReference type="ChEBI" id="CHEBI:456215"/>
    </reaction>
</comment>
<comment type="pathway">
    <text evidence="1">Cofactor biosynthesis; thiamine diphosphate biosynthesis.</text>
</comment>
<comment type="subcellular location">
    <subcellularLocation>
        <location evidence="1">Cytoplasm</location>
    </subcellularLocation>
</comment>
<comment type="similarity">
    <text evidence="1">Belongs to the ThiI family.</text>
</comment>
<name>THII_BACCQ</name>
<reference key="1">
    <citation type="journal article" date="2009" name="J. Bacteriol.">
        <title>Complete genome sequence of the extremophilic Bacillus cereus strain Q1 with industrial applications.</title>
        <authorList>
            <person name="Xiong Z."/>
            <person name="Jiang Y."/>
            <person name="Qi D."/>
            <person name="Lu H."/>
            <person name="Yang F."/>
            <person name="Yang J."/>
            <person name="Chen L."/>
            <person name="Sun L."/>
            <person name="Xu X."/>
            <person name="Xue Y."/>
            <person name="Zhu Y."/>
            <person name="Jin Q."/>
        </authorList>
    </citation>
    <scope>NUCLEOTIDE SEQUENCE [LARGE SCALE GENOMIC DNA]</scope>
    <source>
        <strain>Q1</strain>
    </source>
</reference>
<dbReference type="EC" id="2.8.1.4" evidence="1"/>
<dbReference type="EMBL" id="CP000227">
    <property type="protein sequence ID" value="ACM14889.1"/>
    <property type="molecule type" value="Genomic_DNA"/>
</dbReference>
<dbReference type="SMR" id="B9J151"/>
<dbReference type="KEGG" id="bcq:BCQ_4463"/>
<dbReference type="HOGENOM" id="CLU_037952_4_0_9"/>
<dbReference type="UniPathway" id="UPA00060"/>
<dbReference type="Proteomes" id="UP000000441">
    <property type="component" value="Chromosome"/>
</dbReference>
<dbReference type="GO" id="GO:0005829">
    <property type="term" value="C:cytosol"/>
    <property type="evidence" value="ECO:0007669"/>
    <property type="project" value="TreeGrafter"/>
</dbReference>
<dbReference type="GO" id="GO:0005524">
    <property type="term" value="F:ATP binding"/>
    <property type="evidence" value="ECO:0007669"/>
    <property type="project" value="UniProtKB-UniRule"/>
</dbReference>
<dbReference type="GO" id="GO:0004810">
    <property type="term" value="F:CCA tRNA nucleotidyltransferase activity"/>
    <property type="evidence" value="ECO:0007669"/>
    <property type="project" value="InterPro"/>
</dbReference>
<dbReference type="GO" id="GO:0000049">
    <property type="term" value="F:tRNA binding"/>
    <property type="evidence" value="ECO:0007669"/>
    <property type="project" value="UniProtKB-UniRule"/>
</dbReference>
<dbReference type="GO" id="GO:0140741">
    <property type="term" value="F:tRNA-uracil-4 sulfurtransferase activity"/>
    <property type="evidence" value="ECO:0007669"/>
    <property type="project" value="UniProtKB-EC"/>
</dbReference>
<dbReference type="GO" id="GO:0009228">
    <property type="term" value="P:thiamine biosynthetic process"/>
    <property type="evidence" value="ECO:0007669"/>
    <property type="project" value="UniProtKB-KW"/>
</dbReference>
<dbReference type="GO" id="GO:0009229">
    <property type="term" value="P:thiamine diphosphate biosynthetic process"/>
    <property type="evidence" value="ECO:0007669"/>
    <property type="project" value="UniProtKB-UniRule"/>
</dbReference>
<dbReference type="GO" id="GO:0052837">
    <property type="term" value="P:thiazole biosynthetic process"/>
    <property type="evidence" value="ECO:0007669"/>
    <property type="project" value="TreeGrafter"/>
</dbReference>
<dbReference type="GO" id="GO:0002937">
    <property type="term" value="P:tRNA 4-thiouridine biosynthesis"/>
    <property type="evidence" value="ECO:0007669"/>
    <property type="project" value="TreeGrafter"/>
</dbReference>
<dbReference type="CDD" id="cd01712">
    <property type="entry name" value="PPase_ThiI"/>
    <property type="match status" value="1"/>
</dbReference>
<dbReference type="CDD" id="cd11716">
    <property type="entry name" value="THUMP_ThiI"/>
    <property type="match status" value="1"/>
</dbReference>
<dbReference type="FunFam" id="3.30.2130.30:FF:000003">
    <property type="entry name" value="Probable tRNA sulfurtransferase"/>
    <property type="match status" value="1"/>
</dbReference>
<dbReference type="FunFam" id="3.40.50.620:FF:000053">
    <property type="entry name" value="Probable tRNA sulfurtransferase"/>
    <property type="match status" value="1"/>
</dbReference>
<dbReference type="Gene3D" id="3.30.2130.30">
    <property type="match status" value="1"/>
</dbReference>
<dbReference type="Gene3D" id="3.40.50.620">
    <property type="entry name" value="HUPs"/>
    <property type="match status" value="1"/>
</dbReference>
<dbReference type="HAMAP" id="MF_00021">
    <property type="entry name" value="ThiI"/>
    <property type="match status" value="1"/>
</dbReference>
<dbReference type="InterPro" id="IPR014729">
    <property type="entry name" value="Rossmann-like_a/b/a_fold"/>
</dbReference>
<dbReference type="InterPro" id="IPR020536">
    <property type="entry name" value="ThiI_AANH"/>
</dbReference>
<dbReference type="InterPro" id="IPR054173">
    <property type="entry name" value="ThiI_fer"/>
</dbReference>
<dbReference type="InterPro" id="IPR049961">
    <property type="entry name" value="ThiI_N"/>
</dbReference>
<dbReference type="InterPro" id="IPR004114">
    <property type="entry name" value="THUMP_dom"/>
</dbReference>
<dbReference type="InterPro" id="IPR049962">
    <property type="entry name" value="THUMP_ThiI"/>
</dbReference>
<dbReference type="InterPro" id="IPR003720">
    <property type="entry name" value="tRNA_STrfase"/>
</dbReference>
<dbReference type="InterPro" id="IPR050102">
    <property type="entry name" value="tRNA_sulfurtransferase_ThiI"/>
</dbReference>
<dbReference type="NCBIfam" id="TIGR00342">
    <property type="entry name" value="tRNA uracil 4-sulfurtransferase ThiI"/>
    <property type="match status" value="1"/>
</dbReference>
<dbReference type="PANTHER" id="PTHR43209">
    <property type="entry name" value="TRNA SULFURTRANSFERASE"/>
    <property type="match status" value="1"/>
</dbReference>
<dbReference type="PANTHER" id="PTHR43209:SF1">
    <property type="entry name" value="TRNA SULFURTRANSFERASE"/>
    <property type="match status" value="1"/>
</dbReference>
<dbReference type="Pfam" id="PF02568">
    <property type="entry name" value="ThiI"/>
    <property type="match status" value="1"/>
</dbReference>
<dbReference type="Pfam" id="PF22025">
    <property type="entry name" value="ThiI_fer"/>
    <property type="match status" value="1"/>
</dbReference>
<dbReference type="Pfam" id="PF02926">
    <property type="entry name" value="THUMP"/>
    <property type="match status" value="1"/>
</dbReference>
<dbReference type="SMART" id="SM00981">
    <property type="entry name" value="THUMP"/>
    <property type="match status" value="1"/>
</dbReference>
<dbReference type="SUPFAM" id="SSF52402">
    <property type="entry name" value="Adenine nucleotide alpha hydrolases-like"/>
    <property type="match status" value="1"/>
</dbReference>
<dbReference type="SUPFAM" id="SSF143437">
    <property type="entry name" value="THUMP domain-like"/>
    <property type="match status" value="1"/>
</dbReference>
<dbReference type="PROSITE" id="PS51165">
    <property type="entry name" value="THUMP"/>
    <property type="match status" value="1"/>
</dbReference>
<organism>
    <name type="scientific">Bacillus cereus (strain Q1)</name>
    <dbReference type="NCBI Taxonomy" id="361100"/>
    <lineage>
        <taxon>Bacteria</taxon>
        <taxon>Bacillati</taxon>
        <taxon>Bacillota</taxon>
        <taxon>Bacilli</taxon>
        <taxon>Bacillales</taxon>
        <taxon>Bacillaceae</taxon>
        <taxon>Bacillus</taxon>
        <taxon>Bacillus cereus group</taxon>
    </lineage>
</organism>
<feature type="chain" id="PRO_1000196921" description="Probable tRNA sulfurtransferase">
    <location>
        <begin position="1"/>
        <end position="404"/>
    </location>
</feature>
<feature type="domain" description="THUMP" evidence="1">
    <location>
        <begin position="61"/>
        <end position="166"/>
    </location>
</feature>
<feature type="binding site" evidence="1">
    <location>
        <begin position="184"/>
        <end position="185"/>
    </location>
    <ligand>
        <name>ATP</name>
        <dbReference type="ChEBI" id="CHEBI:30616"/>
    </ligand>
</feature>
<feature type="binding site" evidence="1">
    <location>
        <begin position="209"/>
        <end position="210"/>
    </location>
    <ligand>
        <name>ATP</name>
        <dbReference type="ChEBI" id="CHEBI:30616"/>
    </ligand>
</feature>
<feature type="binding site" evidence="1">
    <location>
        <position position="266"/>
    </location>
    <ligand>
        <name>ATP</name>
        <dbReference type="ChEBI" id="CHEBI:30616"/>
    </ligand>
</feature>
<feature type="binding site" evidence="1">
    <location>
        <position position="288"/>
    </location>
    <ligand>
        <name>ATP</name>
        <dbReference type="ChEBI" id="CHEBI:30616"/>
    </ligand>
</feature>
<feature type="binding site" evidence="1">
    <location>
        <position position="297"/>
    </location>
    <ligand>
        <name>ATP</name>
        <dbReference type="ChEBI" id="CHEBI:30616"/>
    </ligand>
</feature>
<proteinExistence type="inferred from homology"/>
<gene>
    <name evidence="1" type="primary">thiI</name>
    <name type="ordered locus">BCQ_4463</name>
</gene>
<keyword id="KW-0067">ATP-binding</keyword>
<keyword id="KW-0963">Cytoplasm</keyword>
<keyword id="KW-0547">Nucleotide-binding</keyword>
<keyword id="KW-0694">RNA-binding</keyword>
<keyword id="KW-0784">Thiamine biosynthesis</keyword>
<keyword id="KW-0808">Transferase</keyword>
<keyword id="KW-0820">tRNA-binding</keyword>
<protein>
    <recommendedName>
        <fullName evidence="1">Probable tRNA sulfurtransferase</fullName>
        <ecNumber evidence="1">2.8.1.4</ecNumber>
    </recommendedName>
    <alternativeName>
        <fullName evidence="1">Sulfur carrier protein ThiS sulfurtransferase</fullName>
    </alternativeName>
    <alternativeName>
        <fullName evidence="1">Thiamine biosynthesis protein ThiI</fullName>
    </alternativeName>
    <alternativeName>
        <fullName evidence="1">tRNA 4-thiouridine synthase</fullName>
    </alternativeName>
</protein>
<sequence>MMTYEYILVRYGEMTTKGKNRSKFVSTLKDNVKFKLKKFPNIKIDATHDRMYIQLNGEDHEAVSERLKDVFGIHKFNLAMKVPSELEDIKKGALAAFLQVKGDVKTFKITVHRSYKHFPMRTMELLPEIGGHILENTEDITVDVHNPDVNVRVEIRSGYSYIMCDERMGAGGLPVGVGGKVMVLLSGGIDSPVAAYLTMKRGVSVEAVHFHSPPFTSERAKQKVIDLAQELTKYCKRVTLHLVPFTEVQKTINKEIPSSYSMTVMRRMMMRITERIAEERNALAITTGESLGQVASQTLDSMHTINEVTNYPIIRPLITMDKLEIIKIAEEIGTYDISIRPYEDCCTVFTPASPATKPKREKANRFEAKYDFTPLIDEAVANKETMVLQTVEVVAEEEKFEELF</sequence>
<accession>B9J151</accession>